<sequence>MAMLASKSPFPAPLATSGSGMMAGTAQASYPPSRRAPAVPPASQSFSPTESEFSDSDDHDSPKHWDEDKVCEYLRSVRCGEYEKLFRKNHINGENLLEMDKDVLKEMGIEKVGDRVRLFLSIKKLRTKAIAGQKKRNRDSFAGHESMYTPVSESPSKPFHSSSRVMPNPSVNKRYSRQIDLSGMAYDPSRPTTSSRPTSPLPSADFRTARTRNPYVGQQPTPTGSLRGLGSPPDSQANSRPVLTHTRTDSGMDGSLMAALPQNQDVIRVISTGGVTKVVKIADCNTCEEVMRVTLRKFALREDHERNYCFWVLSGLDPDPKQCRRLGDTELWRVIKDQKRPERNRLILRRVPAGEPGQSELERAAAIAMEEAQQSHSRAMDNVGARSQIKVQKVLGENWDNLQPPLSPVLYQDRERNVYNAARDLERPEPLDSGRLQPRRKVLRSFGGLRPPSELIASDLTTYFPDHPREDIDRTARLSMRRSARLSKVNSRLSVASSFSMASSIQDAPPIPTIADSWLQSTPLPKARPRDLQSRLQHGYRDSVASSMLDTLQEEGSPIEPNRKSYVSFADSGSDSAAVSVTDPDGNIVRHSYFDEGSTIGSGSGSGSFGDVSKALNEDGEDADEDLQSFLSGESWDDSKWMKGALIGQGSFGCVYLALHAITGELLAVKQVEAPSPGANSQNDARKKSMIEALKREISLLRDLRHPNIVQYLGCGSSAEYLNIFLEYVPGGSVQTMLNSYGALPEPLVRSFVRQILNGLSYLHEREIIHRDIKGANILVDNKGTIKISDFGISKKIEATNLLNGANNNKHRPSLQGSVFWMAPEVVKQTSYTRKADIWSLGCLVVEMMTGTHPFPDCTQLQAIFKIGGGKATPTIPEDASTEAKAFLAQTFEMDHNKRPSADDLMLSPFLTPIT</sequence>
<reference key="1">
    <citation type="journal article" date="2005" name="Nature">
        <title>The genome sequence of the rice blast fungus Magnaporthe grisea.</title>
        <authorList>
            <person name="Dean R.A."/>
            <person name="Talbot N.J."/>
            <person name="Ebbole D.J."/>
            <person name="Farman M.L."/>
            <person name="Mitchell T.K."/>
            <person name="Orbach M.J."/>
            <person name="Thon M.R."/>
            <person name="Kulkarni R."/>
            <person name="Xu J.-R."/>
            <person name="Pan H."/>
            <person name="Read N.D."/>
            <person name="Lee Y.-H."/>
            <person name="Carbone I."/>
            <person name="Brown D."/>
            <person name="Oh Y.Y."/>
            <person name="Donofrio N."/>
            <person name="Jeong J.S."/>
            <person name="Soanes D.M."/>
            <person name="Djonovic S."/>
            <person name="Kolomiets E."/>
            <person name="Rehmeyer C."/>
            <person name="Li W."/>
            <person name="Harding M."/>
            <person name="Kim S."/>
            <person name="Lebrun M.-H."/>
            <person name="Bohnert H."/>
            <person name="Coughlan S."/>
            <person name="Butler J."/>
            <person name="Calvo S.E."/>
            <person name="Ma L.-J."/>
            <person name="Nicol R."/>
            <person name="Purcell S."/>
            <person name="Nusbaum C."/>
            <person name="Galagan J.E."/>
            <person name="Birren B.W."/>
        </authorList>
    </citation>
    <scope>NUCLEOTIDE SEQUENCE [LARGE SCALE GENOMIC DNA]</scope>
    <source>
        <strain>70-15 / ATCC MYA-4617 / FGSC 8958</strain>
    </source>
</reference>
<reference key="2">
    <citation type="journal article" date="2005" name="Plant Cell">
        <title>A mitogen-activated protein kinase cascade regulating infection-related morphogenesis in Magnaporthe grisea.</title>
        <authorList>
            <person name="Zhao X."/>
            <person name="Kim Y."/>
            <person name="Park G."/>
            <person name="Xu J.R."/>
        </authorList>
    </citation>
    <scope>FUNCTION</scope>
    <scope>DISRUPTION PHENOTYPE</scope>
    <scope>DOMAIN</scope>
    <scope>INTERACTION WITH MST50</scope>
</reference>
<reference key="3">
    <citation type="journal article" date="2011" name="PLoS Pathog.">
        <title>Multiple plant surface signals are sensed by different mechanisms in the rice blast fungus for appressorium formation.</title>
        <authorList>
            <person name="Liu W."/>
            <person name="Zhou X."/>
            <person name="Li G."/>
            <person name="Li L."/>
            <person name="Kong L."/>
            <person name="Wang C."/>
            <person name="Zhang H."/>
            <person name="Xu J.R."/>
        </authorList>
    </citation>
    <scope>FUNCTION</scope>
</reference>
<reference key="4">
    <citation type="journal article" date="2013" name="Gene Expr. Patterns">
        <title>Complexity of roles and regulation of the PMK1-MAPK pathway in mycelium development, conidiation and appressorium formation in Magnaporthe oryzae.</title>
        <authorList>
            <person name="Jin Q."/>
            <person name="Li C."/>
            <person name="Li Y."/>
            <person name="Shang J."/>
            <person name="Li D."/>
            <person name="Chen B."/>
            <person name="Dong H."/>
        </authorList>
    </citation>
    <scope>FUNCTION</scope>
    <scope>DISRUPTION PHENOTYPE</scope>
</reference>
<accession>G4N7X0</accession>
<dbReference type="EC" id="2.7.11.24" evidence="10"/>
<dbReference type="EMBL" id="CM001234">
    <property type="protein sequence ID" value="EHA50924.1"/>
    <property type="molecule type" value="Genomic_DNA"/>
</dbReference>
<dbReference type="RefSeq" id="XP_003717243.1">
    <property type="nucleotide sequence ID" value="XM_003717195.1"/>
</dbReference>
<dbReference type="SMR" id="G4N7X0"/>
<dbReference type="FunCoup" id="G4N7X0">
    <property type="interactions" value="147"/>
</dbReference>
<dbReference type="STRING" id="242507.G4N7X0"/>
<dbReference type="EnsemblFungi" id="MGG_14847T0">
    <property type="protein sequence ID" value="MGG_14847T0"/>
    <property type="gene ID" value="MGG_14847"/>
</dbReference>
<dbReference type="GeneID" id="5048863"/>
<dbReference type="KEGG" id="mgr:MGG_14847"/>
<dbReference type="VEuPathDB" id="FungiDB:MGG_14847"/>
<dbReference type="eggNOG" id="KOG0198">
    <property type="taxonomic scope" value="Eukaryota"/>
</dbReference>
<dbReference type="HOGENOM" id="CLU_003051_0_1_1"/>
<dbReference type="InParanoid" id="G4N7X0"/>
<dbReference type="OMA" id="FIGAHPF"/>
<dbReference type="OrthoDB" id="266718at2759"/>
<dbReference type="PHI-base" id="PHI:2119"/>
<dbReference type="PHI-base" id="PHI:418"/>
<dbReference type="PHI-base" id="PHI:8262"/>
<dbReference type="Proteomes" id="UP000009058">
    <property type="component" value="Chromosome 4"/>
</dbReference>
<dbReference type="GO" id="GO:0005524">
    <property type="term" value="F:ATP binding"/>
    <property type="evidence" value="ECO:0007669"/>
    <property type="project" value="UniProtKB-KW"/>
</dbReference>
<dbReference type="GO" id="GO:0004707">
    <property type="term" value="F:MAP kinase activity"/>
    <property type="evidence" value="ECO:0007669"/>
    <property type="project" value="UniProtKB-EC"/>
</dbReference>
<dbReference type="GO" id="GO:0051094">
    <property type="term" value="P:positive regulation of developmental process"/>
    <property type="evidence" value="ECO:0007669"/>
    <property type="project" value="UniProtKB-ARBA"/>
</dbReference>
<dbReference type="CDD" id="cd09534">
    <property type="entry name" value="SAM_Ste11_fungal"/>
    <property type="match status" value="1"/>
</dbReference>
<dbReference type="FunFam" id="1.10.150.50:FF:000075">
    <property type="entry name" value="Serine/threonine-protein kinase STE11"/>
    <property type="match status" value="1"/>
</dbReference>
<dbReference type="FunFam" id="1.10.510.10:FF:000334">
    <property type="entry name" value="Serine/threonine-protein kinase STE11"/>
    <property type="match status" value="1"/>
</dbReference>
<dbReference type="FunFam" id="3.10.20.90:FF:000214">
    <property type="entry name" value="Serine/threonine-protein kinase STE11"/>
    <property type="match status" value="1"/>
</dbReference>
<dbReference type="FunFam" id="3.30.200.20:FF:000387">
    <property type="entry name" value="Serine/threonine-protein kinase STE11"/>
    <property type="match status" value="1"/>
</dbReference>
<dbReference type="Gene3D" id="3.10.20.90">
    <property type="entry name" value="Phosphatidylinositol 3-kinase Catalytic Subunit, Chain A, domain 1"/>
    <property type="match status" value="1"/>
</dbReference>
<dbReference type="Gene3D" id="1.10.150.50">
    <property type="entry name" value="Transcription Factor, Ets-1"/>
    <property type="match status" value="1"/>
</dbReference>
<dbReference type="Gene3D" id="1.10.510.10">
    <property type="entry name" value="Transferase(Phosphotransferase) domain 1"/>
    <property type="match status" value="1"/>
</dbReference>
<dbReference type="InterPro" id="IPR011009">
    <property type="entry name" value="Kinase-like_dom_sf"/>
</dbReference>
<dbReference type="InterPro" id="IPR050538">
    <property type="entry name" value="MAP_kinase_kinase_kinase"/>
</dbReference>
<dbReference type="InterPro" id="IPR000719">
    <property type="entry name" value="Prot_kinase_dom"/>
</dbReference>
<dbReference type="InterPro" id="IPR017441">
    <property type="entry name" value="Protein_kinase_ATP_BS"/>
</dbReference>
<dbReference type="InterPro" id="IPR000159">
    <property type="entry name" value="RA_dom"/>
</dbReference>
<dbReference type="InterPro" id="IPR029458">
    <property type="entry name" value="Ras-bd_By2"/>
</dbReference>
<dbReference type="InterPro" id="IPR001660">
    <property type="entry name" value="SAM"/>
</dbReference>
<dbReference type="InterPro" id="IPR013761">
    <property type="entry name" value="SAM/pointed_sf"/>
</dbReference>
<dbReference type="InterPro" id="IPR008271">
    <property type="entry name" value="Ser/Thr_kinase_AS"/>
</dbReference>
<dbReference type="PANTHER" id="PTHR48016">
    <property type="entry name" value="MAP KINASE KINASE KINASE SSK2-RELATED-RELATED"/>
    <property type="match status" value="1"/>
</dbReference>
<dbReference type="PANTHER" id="PTHR48016:SF56">
    <property type="entry name" value="MAPKK KINASE"/>
    <property type="match status" value="1"/>
</dbReference>
<dbReference type="Pfam" id="PF00069">
    <property type="entry name" value="Pkinase"/>
    <property type="match status" value="1"/>
</dbReference>
<dbReference type="Pfam" id="PF14847">
    <property type="entry name" value="Ras_bdg_2"/>
    <property type="match status" value="1"/>
</dbReference>
<dbReference type="Pfam" id="PF07647">
    <property type="entry name" value="SAM_2"/>
    <property type="match status" value="1"/>
</dbReference>
<dbReference type="SMART" id="SM01304">
    <property type="entry name" value="Ras_bdg_2"/>
    <property type="match status" value="1"/>
</dbReference>
<dbReference type="SMART" id="SM00220">
    <property type="entry name" value="S_TKc"/>
    <property type="match status" value="1"/>
</dbReference>
<dbReference type="SMART" id="SM00454">
    <property type="entry name" value="SAM"/>
    <property type="match status" value="1"/>
</dbReference>
<dbReference type="SUPFAM" id="SSF56112">
    <property type="entry name" value="Protein kinase-like (PK-like)"/>
    <property type="match status" value="1"/>
</dbReference>
<dbReference type="SUPFAM" id="SSF47769">
    <property type="entry name" value="SAM/Pointed domain"/>
    <property type="match status" value="1"/>
</dbReference>
<dbReference type="PROSITE" id="PS00107">
    <property type="entry name" value="PROTEIN_KINASE_ATP"/>
    <property type="match status" value="1"/>
</dbReference>
<dbReference type="PROSITE" id="PS50011">
    <property type="entry name" value="PROTEIN_KINASE_DOM"/>
    <property type="match status" value="1"/>
</dbReference>
<dbReference type="PROSITE" id="PS00108">
    <property type="entry name" value="PROTEIN_KINASE_ST"/>
    <property type="match status" value="1"/>
</dbReference>
<dbReference type="PROSITE" id="PS50200">
    <property type="entry name" value="RA"/>
    <property type="match status" value="1"/>
</dbReference>
<dbReference type="PROSITE" id="PS50105">
    <property type="entry name" value="SAM_DOMAIN"/>
    <property type="match status" value="1"/>
</dbReference>
<name>MST11_PYRO7</name>
<feature type="chain" id="PRO_0000453097" description="Mitogen-activated protein kinase kinae kinase MST11">
    <location>
        <begin position="1"/>
        <end position="915"/>
    </location>
</feature>
<feature type="domain" description="SAM" evidence="3">
    <location>
        <begin position="65"/>
        <end position="128"/>
    </location>
</feature>
<feature type="domain" description="Ras-associating" evidence="2">
    <location>
        <begin position="263"/>
        <end position="353"/>
    </location>
</feature>
<feature type="domain" description="Protein kinase" evidence="1">
    <location>
        <begin position="641"/>
        <end position="911"/>
    </location>
</feature>
<feature type="region of interest" description="Disordered" evidence="4">
    <location>
        <begin position="1"/>
        <end position="65"/>
    </location>
</feature>
<feature type="region of interest" description="Disordered" evidence="4">
    <location>
        <begin position="134"/>
        <end position="171"/>
    </location>
</feature>
<feature type="region of interest" description="Disordered" evidence="4">
    <location>
        <begin position="183"/>
        <end position="249"/>
    </location>
</feature>
<feature type="compositionally biased region" description="Low complexity" evidence="4">
    <location>
        <begin position="26"/>
        <end position="45"/>
    </location>
</feature>
<feature type="compositionally biased region" description="Low complexity" evidence="4">
    <location>
        <begin position="152"/>
        <end position="163"/>
    </location>
</feature>
<feature type="compositionally biased region" description="Low complexity" evidence="4">
    <location>
        <begin position="188"/>
        <end position="203"/>
    </location>
</feature>
<feature type="binding site" evidence="1">
    <location>
        <begin position="647"/>
        <end position="655"/>
    </location>
    <ligand>
        <name>ATP</name>
        <dbReference type="ChEBI" id="CHEBI:30616"/>
    </ligand>
</feature>
<feature type="binding site" evidence="1">
    <location>
        <position position="670"/>
    </location>
    <ligand>
        <name>ATP</name>
        <dbReference type="ChEBI" id="CHEBI:30616"/>
    </ligand>
</feature>
<comment type="function">
    <text evidence="5 6 7 10">Mitogen-activated protein kinase kinase kinase; part of the MST11-MST7-PMK1 MAP kinase (MAPK) cascade that is essential for appressorium formation, penetration and invasive growth (PubMed:15749760, PubMed:23454094). The MST11-MST7-PMK1 MAP kinase cascade transduces signals from the cell surface sensors MDB2 and SHO1 that recognize various surface signals such as surface hydrophobicity, cutin monomers, and rice leaf waxes (PubMed:21283781). MST11 acts as the upstream MAPKKK that directly phosphorylates MAPKK MST7 (Probable). MST11 but not MST7 may also be involved in the OSM1 MAPK pathway in response to osmotic stresses (PubMed:15749760).</text>
</comment>
<comment type="catalytic activity">
    <reaction evidence="10">
        <text>L-seryl-[protein] + ATP = O-phospho-L-seryl-[protein] + ADP + H(+)</text>
        <dbReference type="Rhea" id="RHEA:17989"/>
        <dbReference type="Rhea" id="RHEA-COMP:9863"/>
        <dbReference type="Rhea" id="RHEA-COMP:11604"/>
        <dbReference type="ChEBI" id="CHEBI:15378"/>
        <dbReference type="ChEBI" id="CHEBI:29999"/>
        <dbReference type="ChEBI" id="CHEBI:30616"/>
        <dbReference type="ChEBI" id="CHEBI:83421"/>
        <dbReference type="ChEBI" id="CHEBI:456216"/>
        <dbReference type="EC" id="2.7.11.24"/>
    </reaction>
    <physiologicalReaction direction="left-to-right" evidence="10">
        <dbReference type="Rhea" id="RHEA:17990"/>
    </physiologicalReaction>
</comment>
<comment type="catalytic activity">
    <reaction evidence="10">
        <text>L-threonyl-[protein] + ATP = O-phospho-L-threonyl-[protein] + ADP + H(+)</text>
        <dbReference type="Rhea" id="RHEA:46608"/>
        <dbReference type="Rhea" id="RHEA-COMP:11060"/>
        <dbReference type="Rhea" id="RHEA-COMP:11605"/>
        <dbReference type="ChEBI" id="CHEBI:15378"/>
        <dbReference type="ChEBI" id="CHEBI:30013"/>
        <dbReference type="ChEBI" id="CHEBI:30616"/>
        <dbReference type="ChEBI" id="CHEBI:61977"/>
        <dbReference type="ChEBI" id="CHEBI:456216"/>
        <dbReference type="EC" id="2.7.11.24"/>
    </reaction>
    <physiologicalReaction direction="left-to-right" evidence="10">
        <dbReference type="Rhea" id="RHEA:46609"/>
    </physiologicalReaction>
</comment>
<comment type="subunit">
    <text evidence="5">Interacts with the adapter protein MST50.</text>
</comment>
<comment type="domain">
    <text evidence="5">The N-terminal sterile alpha motif (SAM) domain, but not the Ras-associating (RA) domain, is essential for the function.</text>
</comment>
<comment type="disruption phenotype">
    <text evidence="5 7">Produces much less aerial hyphae and conidia and shows weakened cell walls and higher sensitivity to cell wall-degrading enzymes (PubMed:15749760). Impairs the formation of appressoria and the ability to infect rice plants (PubMed:15749760, PubMed:23454094).</text>
</comment>
<comment type="similarity">
    <text evidence="9">Belongs to the protein kinase superfamily. STE Ser/Thr protein kinase family. MAP kinase kinase kinase subfamily.</text>
</comment>
<organism>
    <name type="scientific">Pyricularia oryzae (strain 70-15 / ATCC MYA-4617 / FGSC 8958)</name>
    <name type="common">Rice blast fungus</name>
    <name type="synonym">Magnaporthe oryzae</name>
    <dbReference type="NCBI Taxonomy" id="242507"/>
    <lineage>
        <taxon>Eukaryota</taxon>
        <taxon>Fungi</taxon>
        <taxon>Dikarya</taxon>
        <taxon>Ascomycota</taxon>
        <taxon>Pezizomycotina</taxon>
        <taxon>Sordariomycetes</taxon>
        <taxon>Sordariomycetidae</taxon>
        <taxon>Magnaporthales</taxon>
        <taxon>Pyriculariaceae</taxon>
        <taxon>Pyricularia</taxon>
    </lineage>
</organism>
<keyword id="KW-0067">ATP-binding</keyword>
<keyword id="KW-0418">Kinase</keyword>
<keyword id="KW-0547">Nucleotide-binding</keyword>
<keyword id="KW-1185">Reference proteome</keyword>
<keyword id="KW-0808">Transferase</keyword>
<keyword id="KW-0843">Virulence</keyword>
<protein>
    <recommendedName>
        <fullName evidence="8">Mitogen-activated protein kinase kinae kinase MST11</fullName>
        <shortName evidence="8">MAPKKK MST11</shortName>
        <ecNumber evidence="10">2.7.11.24</ecNumber>
    </recommendedName>
    <alternativeName>
        <fullName evidence="8">MEKK MST11</fullName>
    </alternativeName>
</protein>
<evidence type="ECO:0000255" key="1">
    <source>
        <dbReference type="PROSITE-ProRule" id="PRU00159"/>
    </source>
</evidence>
<evidence type="ECO:0000255" key="2">
    <source>
        <dbReference type="PROSITE-ProRule" id="PRU00166"/>
    </source>
</evidence>
<evidence type="ECO:0000255" key="3">
    <source>
        <dbReference type="PROSITE-ProRule" id="PRU00184"/>
    </source>
</evidence>
<evidence type="ECO:0000256" key="4">
    <source>
        <dbReference type="SAM" id="MobiDB-lite"/>
    </source>
</evidence>
<evidence type="ECO:0000269" key="5">
    <source>
    </source>
</evidence>
<evidence type="ECO:0000269" key="6">
    <source>
    </source>
</evidence>
<evidence type="ECO:0000269" key="7">
    <source>
    </source>
</evidence>
<evidence type="ECO:0000303" key="8">
    <source>
    </source>
</evidence>
<evidence type="ECO:0000305" key="9"/>
<evidence type="ECO:0000305" key="10">
    <source>
    </source>
</evidence>
<proteinExistence type="evidence at protein level"/>
<gene>
    <name evidence="8" type="primary">MST11</name>
    <name type="ORF">MGG_14847</name>
</gene>